<name>NU2M_PONPY</name>
<organism>
    <name type="scientific">Pongo pygmaeus</name>
    <name type="common">Bornean orangutan</name>
    <dbReference type="NCBI Taxonomy" id="9600"/>
    <lineage>
        <taxon>Eukaryota</taxon>
        <taxon>Metazoa</taxon>
        <taxon>Chordata</taxon>
        <taxon>Craniata</taxon>
        <taxon>Vertebrata</taxon>
        <taxon>Euteleostomi</taxon>
        <taxon>Mammalia</taxon>
        <taxon>Eutheria</taxon>
        <taxon>Euarchontoglires</taxon>
        <taxon>Primates</taxon>
        <taxon>Haplorrhini</taxon>
        <taxon>Catarrhini</taxon>
        <taxon>Hominidae</taxon>
        <taxon>Pongo</taxon>
    </lineage>
</organism>
<comment type="function">
    <text evidence="1">Core subunit of the mitochondrial membrane respiratory chain NADH dehydrogenase (Complex I) which catalyzes electron transfer from NADH through the respiratory chain, using ubiquinone as an electron acceptor. Essential for the catalytic activity and assembly of complex I.</text>
</comment>
<comment type="catalytic activity">
    <reaction evidence="1">
        <text>a ubiquinone + NADH + 5 H(+)(in) = a ubiquinol + NAD(+) + 4 H(+)(out)</text>
        <dbReference type="Rhea" id="RHEA:29091"/>
        <dbReference type="Rhea" id="RHEA-COMP:9565"/>
        <dbReference type="Rhea" id="RHEA-COMP:9566"/>
        <dbReference type="ChEBI" id="CHEBI:15378"/>
        <dbReference type="ChEBI" id="CHEBI:16389"/>
        <dbReference type="ChEBI" id="CHEBI:17976"/>
        <dbReference type="ChEBI" id="CHEBI:57540"/>
        <dbReference type="ChEBI" id="CHEBI:57945"/>
        <dbReference type="EC" id="7.1.1.2"/>
    </reaction>
</comment>
<comment type="subunit">
    <text evidence="1 2">Core subunit of respiratory chain NADH dehydrogenase (Complex I) which is composed of 45 different subunits. Interacts with TMEM242 (By similarity).</text>
</comment>
<comment type="subcellular location">
    <subcellularLocation>
        <location evidence="2">Mitochondrion inner membrane</location>
        <topology evidence="3">Multi-pass membrane protein</topology>
    </subcellularLocation>
</comment>
<comment type="similarity">
    <text evidence="4">Belongs to the complex I subunit 2 family.</text>
</comment>
<geneLocation type="mitochondrion"/>
<evidence type="ECO:0000250" key="1">
    <source>
        <dbReference type="UniProtKB" id="P03891"/>
    </source>
</evidence>
<evidence type="ECO:0000250" key="2">
    <source>
        <dbReference type="UniProtKB" id="P03892"/>
    </source>
</evidence>
<evidence type="ECO:0000255" key="3"/>
<evidence type="ECO:0000305" key="4"/>
<sequence length="347" mass="38681">MNPLAQPIIYLTVFTGTLITALSSHWFFAWLGLEMNMLAFIPVLTKKTSPRSTEAAIKYFLTQATASMIFLMAILHNNMFSGQWTTANTTNPYSSLMIVTALAMKLGMAPFHFWVPEVTQGVPLTSGLLLLTWQKLAPISIMYQMYPSVDTNILLTLSILSILVGSWGGLNQTQLHKILAYSSITHMGWMVAVLPYNPNITILNLIIYITLTTTTFLILDLNSSTTILLLSRTWNKLTWLMPLISSTLLSLGGLPPLTGFLPKWAIIEEFAKNDNLIAPTIMAIISLLNLYFYARLIYITSITLLPMSNNVKMKWQFENTKPAPLLPTLTILTALLLPISPLILSIP</sequence>
<feature type="chain" id="PRO_0000117630" description="NADH-ubiquinone oxidoreductase chain 2">
    <location>
        <begin position="1"/>
        <end position="347"/>
    </location>
</feature>
<feature type="transmembrane region" description="Helical" evidence="3">
    <location>
        <begin position="13"/>
        <end position="33"/>
    </location>
</feature>
<feature type="transmembrane region" description="Helical" evidence="3">
    <location>
        <begin position="55"/>
        <end position="75"/>
    </location>
</feature>
<feature type="transmembrane region" description="Helical" evidence="3">
    <location>
        <begin position="96"/>
        <end position="116"/>
    </location>
</feature>
<feature type="transmembrane region" description="Helical" evidence="3">
    <location>
        <begin position="122"/>
        <end position="142"/>
    </location>
</feature>
<feature type="transmembrane region" description="Helical" evidence="3">
    <location>
        <begin position="151"/>
        <end position="171"/>
    </location>
</feature>
<feature type="transmembrane region" description="Helical" evidence="3">
    <location>
        <begin position="178"/>
        <end position="198"/>
    </location>
</feature>
<feature type="transmembrane region" description="Helical" evidence="3">
    <location>
        <begin position="199"/>
        <end position="219"/>
    </location>
</feature>
<feature type="transmembrane region" description="Helical" evidence="3">
    <location>
        <begin position="237"/>
        <end position="257"/>
    </location>
</feature>
<feature type="transmembrane region" description="Helical" evidence="3">
    <location>
        <begin position="277"/>
        <end position="297"/>
    </location>
</feature>
<feature type="transmembrane region" description="Helical" evidence="3">
    <location>
        <begin position="326"/>
        <end position="346"/>
    </location>
</feature>
<dbReference type="EC" id="7.1.1.2" evidence="1"/>
<dbReference type="EMBL" id="D38115">
    <property type="protein sequence ID" value="BAA85286.1"/>
    <property type="molecule type" value="Genomic_DNA"/>
</dbReference>
<dbReference type="RefSeq" id="NP_008226.1">
    <property type="nucleotide sequence ID" value="NC_001646.1"/>
</dbReference>
<dbReference type="SMR" id="Q9T9X8"/>
<dbReference type="GeneID" id="807907"/>
<dbReference type="KEGG" id="ppyg:807907"/>
<dbReference type="CTD" id="4536"/>
<dbReference type="GO" id="GO:0005743">
    <property type="term" value="C:mitochondrial inner membrane"/>
    <property type="evidence" value="ECO:0000250"/>
    <property type="project" value="UniProtKB"/>
</dbReference>
<dbReference type="GO" id="GO:0008137">
    <property type="term" value="F:NADH dehydrogenase (ubiquinone) activity"/>
    <property type="evidence" value="ECO:0007669"/>
    <property type="project" value="UniProtKB-EC"/>
</dbReference>
<dbReference type="GO" id="GO:0006120">
    <property type="term" value="P:mitochondrial electron transport, NADH to ubiquinone"/>
    <property type="evidence" value="ECO:0007669"/>
    <property type="project" value="InterPro"/>
</dbReference>
<dbReference type="InterPro" id="IPR050175">
    <property type="entry name" value="Complex_I_Subunit_2"/>
</dbReference>
<dbReference type="InterPro" id="IPR010933">
    <property type="entry name" value="NADH_DH_su2_C"/>
</dbReference>
<dbReference type="InterPro" id="IPR003917">
    <property type="entry name" value="NADH_UbQ_OxRdtase_chain2"/>
</dbReference>
<dbReference type="InterPro" id="IPR001750">
    <property type="entry name" value="ND/Mrp_TM"/>
</dbReference>
<dbReference type="PANTHER" id="PTHR46552">
    <property type="entry name" value="NADH-UBIQUINONE OXIDOREDUCTASE CHAIN 2"/>
    <property type="match status" value="1"/>
</dbReference>
<dbReference type="PANTHER" id="PTHR46552:SF1">
    <property type="entry name" value="NADH-UBIQUINONE OXIDOREDUCTASE CHAIN 2"/>
    <property type="match status" value="1"/>
</dbReference>
<dbReference type="Pfam" id="PF06444">
    <property type="entry name" value="NADH_dehy_S2_C"/>
    <property type="match status" value="1"/>
</dbReference>
<dbReference type="Pfam" id="PF00361">
    <property type="entry name" value="Proton_antipo_M"/>
    <property type="match status" value="1"/>
</dbReference>
<dbReference type="PRINTS" id="PR01436">
    <property type="entry name" value="NADHDHGNASE2"/>
</dbReference>
<protein>
    <recommendedName>
        <fullName evidence="1">NADH-ubiquinone oxidoreductase chain 2</fullName>
        <ecNumber evidence="1">7.1.1.2</ecNumber>
    </recommendedName>
    <alternativeName>
        <fullName>NADH dehydrogenase subunit 2</fullName>
    </alternativeName>
</protein>
<reference key="1">
    <citation type="journal article" date="1995" name="Proc. Natl. Acad. Sci. U.S.A.">
        <title>Recent African origin of modern humans revealed by complete sequences of hominoid mitochondrial DNAs.</title>
        <authorList>
            <person name="Horai S."/>
            <person name="Hayasaka K."/>
            <person name="Kondo R."/>
            <person name="Tsugane K."/>
            <person name="Takahata N."/>
        </authorList>
    </citation>
    <scope>NUCLEOTIDE SEQUENCE [GENOMIC DNA]</scope>
</reference>
<accession>Q9T9X8</accession>
<keyword id="KW-0249">Electron transport</keyword>
<keyword id="KW-0472">Membrane</keyword>
<keyword id="KW-0496">Mitochondrion</keyword>
<keyword id="KW-0999">Mitochondrion inner membrane</keyword>
<keyword id="KW-0520">NAD</keyword>
<keyword id="KW-0679">Respiratory chain</keyword>
<keyword id="KW-1278">Translocase</keyword>
<keyword id="KW-0812">Transmembrane</keyword>
<keyword id="KW-1133">Transmembrane helix</keyword>
<keyword id="KW-0813">Transport</keyword>
<keyword id="KW-0830">Ubiquinone</keyword>
<proteinExistence type="inferred from homology"/>
<gene>
    <name evidence="1" type="primary">MT-ND2</name>
    <name type="synonym">MTND2</name>
    <name type="synonym">NADH2</name>
    <name type="synonym">ND2</name>
</gene>